<reference key="1">
    <citation type="journal article" date="2009" name="Genome Biol.">
        <title>Genomic and genetic analyses of diversity and plant interactions of Pseudomonas fluorescens.</title>
        <authorList>
            <person name="Silby M.W."/>
            <person name="Cerdeno-Tarraga A.M."/>
            <person name="Vernikos G.S."/>
            <person name="Giddens S.R."/>
            <person name="Jackson R.W."/>
            <person name="Preston G.M."/>
            <person name="Zhang X.-X."/>
            <person name="Moon C.D."/>
            <person name="Gehrig S.M."/>
            <person name="Godfrey S.A.C."/>
            <person name="Knight C.G."/>
            <person name="Malone J.G."/>
            <person name="Robinson Z."/>
            <person name="Spiers A.J."/>
            <person name="Harris S."/>
            <person name="Challis G.L."/>
            <person name="Yaxley A.M."/>
            <person name="Harris D."/>
            <person name="Seeger K."/>
            <person name="Murphy L."/>
            <person name="Rutter S."/>
            <person name="Squares R."/>
            <person name="Quail M.A."/>
            <person name="Saunders E."/>
            <person name="Mavromatis K."/>
            <person name="Brettin T.S."/>
            <person name="Bentley S.D."/>
            <person name="Hothersall J."/>
            <person name="Stephens E."/>
            <person name="Thomas C.M."/>
            <person name="Parkhill J."/>
            <person name="Levy S.B."/>
            <person name="Rainey P.B."/>
            <person name="Thomson N.R."/>
        </authorList>
    </citation>
    <scope>NUCLEOTIDE SEQUENCE [LARGE SCALE GENOMIC DNA]</scope>
    <source>
        <strain>SBW25</strain>
    </source>
</reference>
<gene>
    <name evidence="1" type="primary">hldE</name>
    <name type="ordered locus">PFLU_0482</name>
</gene>
<proteinExistence type="inferred from homology"/>
<sequence>MKLSMPRFDQAPVLVVGDVMLDRYWHGGTSRISPEAPVPVVKVEQIEDRPGGAANVALNIAALGAPASLVGVTGDDEAAESLANSLRGAGVRALFQRIAHQPTIVKLRVMSRHQQLLRIDFEEPFATDALALNGQVDELLEGVKVLVLSDYGKGALKNHQELIQAAKAKGIPVLADPKGKDFSIYRGASLITPNLSEFEAIVGGCADEHDLVTKGAALMADLDLGALLVTRGEHGMTLLRPGHPAMHLPARAREVFDVTGAGDTVISTLAASIAAGEELPHAVALANLAAGIVVGKLGTAAISAPELRRAIQRSEGSERGVLTIEQLLLAIDDARAHNESIVFTNGCFDILHAGHVTYLEQARAQGDRLIVAVNDDASVSRLKGPGRPINSVDRRMAVLAGLGAVDWVISFPEATPENLLAQVKPDVLVKGGDYSVDQVVGADIVSAYGGKVKVLGLVENSSTTAIVEKIRNNE</sequence>
<accession>C3KDB8</accession>
<keyword id="KW-0067">ATP-binding</keyword>
<keyword id="KW-0119">Carbohydrate metabolism</keyword>
<keyword id="KW-0418">Kinase</keyword>
<keyword id="KW-0511">Multifunctional enzyme</keyword>
<keyword id="KW-0547">Nucleotide-binding</keyword>
<keyword id="KW-0548">Nucleotidyltransferase</keyword>
<keyword id="KW-0808">Transferase</keyword>
<dbReference type="EC" id="2.7.1.167" evidence="1"/>
<dbReference type="EC" id="2.7.7.70" evidence="1"/>
<dbReference type="EMBL" id="AM181176">
    <property type="protein sequence ID" value="CAY46758.1"/>
    <property type="molecule type" value="Genomic_DNA"/>
</dbReference>
<dbReference type="RefSeq" id="WP_012721880.1">
    <property type="nucleotide sequence ID" value="NC_012660.1"/>
</dbReference>
<dbReference type="SMR" id="C3KDB8"/>
<dbReference type="STRING" id="294.SRM1_00533"/>
<dbReference type="GeneID" id="93462083"/>
<dbReference type="eggNOG" id="COG0615">
    <property type="taxonomic scope" value="Bacteria"/>
</dbReference>
<dbReference type="eggNOG" id="COG2870">
    <property type="taxonomic scope" value="Bacteria"/>
</dbReference>
<dbReference type="HOGENOM" id="CLU_021150_2_1_6"/>
<dbReference type="OrthoDB" id="9802794at2"/>
<dbReference type="UniPathway" id="UPA00356">
    <property type="reaction ID" value="UER00437"/>
</dbReference>
<dbReference type="UniPathway" id="UPA00356">
    <property type="reaction ID" value="UER00439"/>
</dbReference>
<dbReference type="GO" id="GO:0005829">
    <property type="term" value="C:cytosol"/>
    <property type="evidence" value="ECO:0007669"/>
    <property type="project" value="TreeGrafter"/>
</dbReference>
<dbReference type="GO" id="GO:0005524">
    <property type="term" value="F:ATP binding"/>
    <property type="evidence" value="ECO:0007669"/>
    <property type="project" value="UniProtKB-UniRule"/>
</dbReference>
<dbReference type="GO" id="GO:0033785">
    <property type="term" value="F:heptose 7-phosphate kinase activity"/>
    <property type="evidence" value="ECO:0007669"/>
    <property type="project" value="UniProtKB-UniRule"/>
</dbReference>
<dbReference type="GO" id="GO:0033786">
    <property type="term" value="F:heptose-1-phosphate adenylyltransferase activity"/>
    <property type="evidence" value="ECO:0007669"/>
    <property type="project" value="UniProtKB-UniRule"/>
</dbReference>
<dbReference type="GO" id="GO:0016773">
    <property type="term" value="F:phosphotransferase activity, alcohol group as acceptor"/>
    <property type="evidence" value="ECO:0007669"/>
    <property type="project" value="InterPro"/>
</dbReference>
<dbReference type="GO" id="GO:0097171">
    <property type="term" value="P:ADP-L-glycero-beta-D-manno-heptose biosynthetic process"/>
    <property type="evidence" value="ECO:0007669"/>
    <property type="project" value="UniProtKB-UniPathway"/>
</dbReference>
<dbReference type="CDD" id="cd01172">
    <property type="entry name" value="RfaE_like"/>
    <property type="match status" value="1"/>
</dbReference>
<dbReference type="FunFam" id="3.40.1190.20:FF:000002">
    <property type="entry name" value="Bifunctional protein HldE"/>
    <property type="match status" value="1"/>
</dbReference>
<dbReference type="FunFam" id="3.40.50.620:FF:000028">
    <property type="entry name" value="Bifunctional protein HldE"/>
    <property type="match status" value="1"/>
</dbReference>
<dbReference type="Gene3D" id="3.40.1190.20">
    <property type="match status" value="1"/>
</dbReference>
<dbReference type="Gene3D" id="3.40.50.620">
    <property type="entry name" value="HUPs"/>
    <property type="match status" value="1"/>
</dbReference>
<dbReference type="HAMAP" id="MF_01603">
    <property type="entry name" value="HldE"/>
    <property type="match status" value="1"/>
</dbReference>
<dbReference type="InterPro" id="IPR023030">
    <property type="entry name" value="Bifunc_HldE"/>
</dbReference>
<dbReference type="InterPro" id="IPR002173">
    <property type="entry name" value="Carboh/pur_kinase_PfkB_CS"/>
</dbReference>
<dbReference type="InterPro" id="IPR004821">
    <property type="entry name" value="Cyt_trans-like"/>
</dbReference>
<dbReference type="InterPro" id="IPR011611">
    <property type="entry name" value="PfkB_dom"/>
</dbReference>
<dbReference type="InterPro" id="IPR011913">
    <property type="entry name" value="RfaE_dom_I"/>
</dbReference>
<dbReference type="InterPro" id="IPR011914">
    <property type="entry name" value="RfaE_dom_II"/>
</dbReference>
<dbReference type="InterPro" id="IPR029056">
    <property type="entry name" value="Ribokinase-like"/>
</dbReference>
<dbReference type="InterPro" id="IPR014729">
    <property type="entry name" value="Rossmann-like_a/b/a_fold"/>
</dbReference>
<dbReference type="NCBIfam" id="TIGR00125">
    <property type="entry name" value="cyt_tran_rel"/>
    <property type="match status" value="1"/>
</dbReference>
<dbReference type="NCBIfam" id="NF008454">
    <property type="entry name" value="PRK11316.1"/>
    <property type="match status" value="1"/>
</dbReference>
<dbReference type="NCBIfam" id="TIGR02198">
    <property type="entry name" value="rfaE_dom_I"/>
    <property type="match status" value="1"/>
</dbReference>
<dbReference type="NCBIfam" id="TIGR02199">
    <property type="entry name" value="rfaE_dom_II"/>
    <property type="match status" value="1"/>
</dbReference>
<dbReference type="PANTHER" id="PTHR46969">
    <property type="entry name" value="BIFUNCTIONAL PROTEIN HLDE"/>
    <property type="match status" value="1"/>
</dbReference>
<dbReference type="PANTHER" id="PTHR46969:SF1">
    <property type="entry name" value="BIFUNCTIONAL PROTEIN HLDE"/>
    <property type="match status" value="1"/>
</dbReference>
<dbReference type="Pfam" id="PF01467">
    <property type="entry name" value="CTP_transf_like"/>
    <property type="match status" value="1"/>
</dbReference>
<dbReference type="Pfam" id="PF00294">
    <property type="entry name" value="PfkB"/>
    <property type="match status" value="1"/>
</dbReference>
<dbReference type="SUPFAM" id="SSF52374">
    <property type="entry name" value="Nucleotidylyl transferase"/>
    <property type="match status" value="1"/>
</dbReference>
<dbReference type="SUPFAM" id="SSF53613">
    <property type="entry name" value="Ribokinase-like"/>
    <property type="match status" value="1"/>
</dbReference>
<dbReference type="PROSITE" id="PS00583">
    <property type="entry name" value="PFKB_KINASES_1"/>
    <property type="match status" value="1"/>
</dbReference>
<evidence type="ECO:0000255" key="1">
    <source>
        <dbReference type="HAMAP-Rule" id="MF_01603"/>
    </source>
</evidence>
<organism>
    <name type="scientific">Pseudomonas fluorescens (strain SBW25)</name>
    <dbReference type="NCBI Taxonomy" id="216595"/>
    <lineage>
        <taxon>Bacteria</taxon>
        <taxon>Pseudomonadati</taxon>
        <taxon>Pseudomonadota</taxon>
        <taxon>Gammaproteobacteria</taxon>
        <taxon>Pseudomonadales</taxon>
        <taxon>Pseudomonadaceae</taxon>
        <taxon>Pseudomonas</taxon>
    </lineage>
</organism>
<feature type="chain" id="PRO_1000215695" description="Bifunctional protein HldE">
    <location>
        <begin position="1"/>
        <end position="474"/>
    </location>
</feature>
<feature type="region of interest" description="Ribokinase">
    <location>
        <begin position="1"/>
        <end position="317"/>
    </location>
</feature>
<feature type="region of interest" description="Cytidylyltransferase">
    <location>
        <begin position="343"/>
        <end position="474"/>
    </location>
</feature>
<feature type="active site" evidence="1">
    <location>
        <position position="263"/>
    </location>
</feature>
<feature type="binding site" evidence="1">
    <location>
        <begin position="194"/>
        <end position="197"/>
    </location>
    <ligand>
        <name>ATP</name>
        <dbReference type="ChEBI" id="CHEBI:30616"/>
    </ligand>
</feature>
<comment type="function">
    <text evidence="1">Catalyzes the phosphorylation of D-glycero-D-manno-heptose 7-phosphate at the C-1 position to selectively form D-glycero-beta-D-manno-heptose-1,7-bisphosphate.</text>
</comment>
<comment type="function">
    <text evidence="1">Catalyzes the ADP transfer from ATP to D-glycero-beta-D-manno-heptose 1-phosphate, yielding ADP-D-glycero-beta-D-manno-heptose.</text>
</comment>
<comment type="catalytic activity">
    <reaction evidence="1">
        <text>D-glycero-beta-D-manno-heptose 7-phosphate + ATP = D-glycero-beta-D-manno-heptose 1,7-bisphosphate + ADP + H(+)</text>
        <dbReference type="Rhea" id="RHEA:27473"/>
        <dbReference type="ChEBI" id="CHEBI:15378"/>
        <dbReference type="ChEBI" id="CHEBI:30616"/>
        <dbReference type="ChEBI" id="CHEBI:60204"/>
        <dbReference type="ChEBI" id="CHEBI:60208"/>
        <dbReference type="ChEBI" id="CHEBI:456216"/>
        <dbReference type="EC" id="2.7.1.167"/>
    </reaction>
</comment>
<comment type="catalytic activity">
    <reaction evidence="1">
        <text>D-glycero-beta-D-manno-heptose 1-phosphate + ATP + H(+) = ADP-D-glycero-beta-D-manno-heptose + diphosphate</text>
        <dbReference type="Rhea" id="RHEA:27465"/>
        <dbReference type="ChEBI" id="CHEBI:15378"/>
        <dbReference type="ChEBI" id="CHEBI:30616"/>
        <dbReference type="ChEBI" id="CHEBI:33019"/>
        <dbReference type="ChEBI" id="CHEBI:59967"/>
        <dbReference type="ChEBI" id="CHEBI:61593"/>
        <dbReference type="EC" id="2.7.7.70"/>
    </reaction>
</comment>
<comment type="pathway">
    <text evidence="1">Nucleotide-sugar biosynthesis; ADP-L-glycero-beta-D-manno-heptose biosynthesis; ADP-L-glycero-beta-D-manno-heptose from D-glycero-beta-D-manno-heptose 7-phosphate: step 1/4.</text>
</comment>
<comment type="pathway">
    <text evidence="1">Nucleotide-sugar biosynthesis; ADP-L-glycero-beta-D-manno-heptose biosynthesis; ADP-L-glycero-beta-D-manno-heptose from D-glycero-beta-D-manno-heptose 7-phosphate: step 3/4.</text>
</comment>
<comment type="subunit">
    <text evidence="1">Homodimer.</text>
</comment>
<comment type="similarity">
    <text evidence="1">In the N-terminal section; belongs to the carbohydrate kinase PfkB family.</text>
</comment>
<comment type="similarity">
    <text evidence="1">In the C-terminal section; belongs to the cytidylyltransferase family.</text>
</comment>
<protein>
    <recommendedName>
        <fullName evidence="1">Bifunctional protein HldE</fullName>
    </recommendedName>
    <domain>
        <recommendedName>
            <fullName evidence="1">D-beta-D-heptose 7-phosphate kinase</fullName>
            <ecNumber evidence="1">2.7.1.167</ecNumber>
        </recommendedName>
        <alternativeName>
            <fullName evidence="1">D-beta-D-heptose 7-phosphotransferase</fullName>
        </alternativeName>
        <alternativeName>
            <fullName evidence="1">D-glycero-beta-D-manno-heptose-7-phosphate kinase</fullName>
        </alternativeName>
    </domain>
    <domain>
        <recommendedName>
            <fullName evidence="1">D-beta-D-heptose 1-phosphate adenylyltransferase</fullName>
            <ecNumber evidence="1">2.7.7.70</ecNumber>
        </recommendedName>
        <alternativeName>
            <fullName evidence="1">D-glycero-beta-D-manno-heptose 1-phosphate adenylyltransferase</fullName>
        </alternativeName>
    </domain>
</protein>
<name>HLDE_PSEFS</name>